<keyword id="KW-0963">Cytoplasm</keyword>
<keyword id="KW-0206">Cytoskeleton</keyword>
<keyword id="KW-0342">GTP-binding</keyword>
<keyword id="KW-0460">Magnesium</keyword>
<keyword id="KW-0479">Metal-binding</keyword>
<keyword id="KW-0493">Microtubule</keyword>
<keyword id="KW-0547">Nucleotide-binding</keyword>
<protein>
    <recommendedName>
        <fullName>Tubulin beta chain</fullName>
    </recommendedName>
    <alternativeName>
        <fullName>Beta-tubulin</fullName>
    </alternativeName>
</protein>
<proteinExistence type="evidence at transcript level"/>
<evidence type="ECO:0000250" key="1">
    <source>
        <dbReference type="UniProtKB" id="P68363"/>
    </source>
</evidence>
<evidence type="ECO:0000250" key="2">
    <source>
        <dbReference type="UniProtKB" id="Q13509"/>
    </source>
</evidence>
<evidence type="ECO:0000256" key="3">
    <source>
        <dbReference type="SAM" id="MobiDB-lite"/>
    </source>
</evidence>
<evidence type="ECO:0000305" key="4"/>
<reference key="1">
    <citation type="journal article" date="1999" name="Mol. Gen. Genet.">
        <title>Analysis of beta-tubulin cDNAs from taxol-resistant Pestalotiopsis microspora and taxol-sensitive Pythium ultimum and comparison of the taxol-binding properties of their products.</title>
        <authorList>
            <person name="Mu J.-H."/>
            <person name="Bollon A.P."/>
            <person name="Sidhu R.S."/>
        </authorList>
    </citation>
    <scope>NUCLEOTIDE SEQUENCE [MRNA]</scope>
    <source>
        <strain>Ne32</strain>
    </source>
</reference>
<sequence>MREIVHLQTGQCGNQIGAAFWQTISGEHGLDSNGVYNGTSELQLERMSVYFNEASGNKYVPRAVLVDLEPGTMDAVRAGPFGQLFRPDNFVFGQSGAGNNWAKGHYTEGAELVDQVLDVVRREAEACDCLQGFQITHSLGGGTGAGMGTLLISKIREEFPDRMMATFSVVPSPKVSDTVVEPYNATLSVHQLVENSDETFCIDNEALYDICMRTLKLSNPSYGDLNHLVSAVMSGVTTCLRFPGQLNSDLRKLAVNMVPFPRLHFFMVGFAPLTSRGAHSFRAVTVPELTQQMFDPKNMMAASDFRNGRYLTCSAIFRGKVSMKEVEDQMRNVQNKNSSYFVEWIPNNVQTALCSIPPRGLKMSSTFVGNSTAIQELFKRIGEQFTAMFRRKAFLHWYTGEGMDEMEFTEAESNMNDLVSEYQQYQDAGVDEEEEEYEEEPLPEDE</sequence>
<organism>
    <name type="scientific">Pestalotiopsis microspora</name>
    <dbReference type="NCBI Taxonomy" id="85828"/>
    <lineage>
        <taxon>Eukaryota</taxon>
        <taxon>Fungi</taxon>
        <taxon>Dikarya</taxon>
        <taxon>Ascomycota</taxon>
        <taxon>Pezizomycotina</taxon>
        <taxon>Sordariomycetes</taxon>
        <taxon>Xylariomycetidae</taxon>
        <taxon>Amphisphaeriales</taxon>
        <taxon>Sporocadaceae</taxon>
        <taxon>Pestalotiopsis</taxon>
    </lineage>
</organism>
<accession>Q9UV72</accession>
<comment type="function">
    <text>Tubulin is the major constituent of microtubules, a cylinder consisting of laterally associated linear protofilaments composed of alpha- and beta-tubulin heterodimers. Microtubules grow by the addition of GTP-tubulin dimers to the microtubule end, where a stabilizing cap forms. Below the cap, tubulin dimers are in GDP-bound state, owing to GTPase activity of alpha-tubulin.</text>
</comment>
<comment type="cofactor">
    <cofactor evidence="1">
        <name>Mg(2+)</name>
        <dbReference type="ChEBI" id="CHEBI:18420"/>
    </cofactor>
</comment>
<comment type="subunit">
    <text>Dimer of alpha and beta chains. A typical microtubule is a hollow water-filled tube with an outer diameter of 25 nm and an inner diameter of 15 nM. Alpha-beta heterodimers associate head-to-tail to form protofilaments running lengthwise along the microtubule wall with the beta-tubulin subunit facing the microtubule plus end conferring a structural polarity. Microtubules usually have 13 protofilaments but different protofilament numbers can be found in some organisms and specialized cells.</text>
</comment>
<comment type="subcellular location">
    <subcellularLocation>
        <location>Cytoplasm</location>
        <location>Cytoskeleton</location>
    </subcellularLocation>
</comment>
<comment type="similarity">
    <text evidence="4">Belongs to the tubulin family.</text>
</comment>
<dbReference type="EMBL" id="AF115396">
    <property type="protein sequence ID" value="AAF22514.1"/>
    <property type="molecule type" value="mRNA"/>
</dbReference>
<dbReference type="SMR" id="Q9UV72"/>
<dbReference type="GO" id="GO:0005737">
    <property type="term" value="C:cytoplasm"/>
    <property type="evidence" value="ECO:0007669"/>
    <property type="project" value="UniProtKB-KW"/>
</dbReference>
<dbReference type="GO" id="GO:0005874">
    <property type="term" value="C:microtubule"/>
    <property type="evidence" value="ECO:0007669"/>
    <property type="project" value="UniProtKB-KW"/>
</dbReference>
<dbReference type="GO" id="GO:0005525">
    <property type="term" value="F:GTP binding"/>
    <property type="evidence" value="ECO:0007669"/>
    <property type="project" value="UniProtKB-KW"/>
</dbReference>
<dbReference type="GO" id="GO:0003924">
    <property type="term" value="F:GTPase activity"/>
    <property type="evidence" value="ECO:0007669"/>
    <property type="project" value="InterPro"/>
</dbReference>
<dbReference type="GO" id="GO:0046872">
    <property type="term" value="F:metal ion binding"/>
    <property type="evidence" value="ECO:0007669"/>
    <property type="project" value="UniProtKB-KW"/>
</dbReference>
<dbReference type="GO" id="GO:0005200">
    <property type="term" value="F:structural constituent of cytoskeleton"/>
    <property type="evidence" value="ECO:0007669"/>
    <property type="project" value="InterPro"/>
</dbReference>
<dbReference type="GO" id="GO:0007017">
    <property type="term" value="P:microtubule-based process"/>
    <property type="evidence" value="ECO:0007669"/>
    <property type="project" value="InterPro"/>
</dbReference>
<dbReference type="CDD" id="cd02187">
    <property type="entry name" value="beta_tubulin"/>
    <property type="match status" value="1"/>
</dbReference>
<dbReference type="FunFam" id="1.10.287.600:FF:000003">
    <property type="entry name" value="Tubulin beta chain"/>
    <property type="match status" value="1"/>
</dbReference>
<dbReference type="FunFam" id="3.30.1330.20:FF:000002">
    <property type="entry name" value="Tubulin beta chain"/>
    <property type="match status" value="1"/>
</dbReference>
<dbReference type="FunFam" id="3.40.50.1440:FF:000009">
    <property type="entry name" value="Tubulin beta chain"/>
    <property type="match status" value="1"/>
</dbReference>
<dbReference type="Gene3D" id="1.10.287.600">
    <property type="entry name" value="Helix hairpin bin"/>
    <property type="match status" value="1"/>
</dbReference>
<dbReference type="Gene3D" id="3.30.1330.20">
    <property type="entry name" value="Tubulin/FtsZ, C-terminal domain"/>
    <property type="match status" value="1"/>
</dbReference>
<dbReference type="Gene3D" id="3.40.50.1440">
    <property type="entry name" value="Tubulin/FtsZ, GTPase domain"/>
    <property type="match status" value="1"/>
</dbReference>
<dbReference type="InterPro" id="IPR013838">
    <property type="entry name" value="Beta-tubulin_BS"/>
</dbReference>
<dbReference type="InterPro" id="IPR002453">
    <property type="entry name" value="Beta_tubulin"/>
</dbReference>
<dbReference type="InterPro" id="IPR008280">
    <property type="entry name" value="Tub_FtsZ_C"/>
</dbReference>
<dbReference type="InterPro" id="IPR000217">
    <property type="entry name" value="Tubulin"/>
</dbReference>
<dbReference type="InterPro" id="IPR037103">
    <property type="entry name" value="Tubulin/FtsZ-like_C"/>
</dbReference>
<dbReference type="InterPro" id="IPR018316">
    <property type="entry name" value="Tubulin/FtsZ_2-layer-sand-dom"/>
</dbReference>
<dbReference type="InterPro" id="IPR036525">
    <property type="entry name" value="Tubulin/FtsZ_GTPase_sf"/>
</dbReference>
<dbReference type="InterPro" id="IPR023123">
    <property type="entry name" value="Tubulin_C"/>
</dbReference>
<dbReference type="InterPro" id="IPR017975">
    <property type="entry name" value="Tubulin_CS"/>
</dbReference>
<dbReference type="InterPro" id="IPR003008">
    <property type="entry name" value="Tubulin_FtsZ_GTPase"/>
</dbReference>
<dbReference type="PANTHER" id="PTHR11588">
    <property type="entry name" value="TUBULIN"/>
    <property type="match status" value="1"/>
</dbReference>
<dbReference type="Pfam" id="PF00091">
    <property type="entry name" value="Tubulin"/>
    <property type="match status" value="1"/>
</dbReference>
<dbReference type="Pfam" id="PF03953">
    <property type="entry name" value="Tubulin_C"/>
    <property type="match status" value="1"/>
</dbReference>
<dbReference type="PRINTS" id="PR01163">
    <property type="entry name" value="BETATUBULIN"/>
</dbReference>
<dbReference type="PRINTS" id="PR01161">
    <property type="entry name" value="TUBULIN"/>
</dbReference>
<dbReference type="SMART" id="SM00864">
    <property type="entry name" value="Tubulin"/>
    <property type="match status" value="1"/>
</dbReference>
<dbReference type="SMART" id="SM00865">
    <property type="entry name" value="Tubulin_C"/>
    <property type="match status" value="1"/>
</dbReference>
<dbReference type="SUPFAM" id="SSF55307">
    <property type="entry name" value="Tubulin C-terminal domain-like"/>
    <property type="match status" value="1"/>
</dbReference>
<dbReference type="SUPFAM" id="SSF52490">
    <property type="entry name" value="Tubulin nucleotide-binding domain-like"/>
    <property type="match status" value="1"/>
</dbReference>
<dbReference type="PROSITE" id="PS00227">
    <property type="entry name" value="TUBULIN"/>
    <property type="match status" value="1"/>
</dbReference>
<dbReference type="PROSITE" id="PS00228">
    <property type="entry name" value="TUBULIN_B_AUTOREG"/>
    <property type="match status" value="1"/>
</dbReference>
<gene>
    <name type="primary">TUBB</name>
</gene>
<name>TBB_PESMI</name>
<feature type="chain" id="PRO_0000048424" description="Tubulin beta chain">
    <location>
        <begin position="1"/>
        <end position="446"/>
    </location>
</feature>
<feature type="region of interest" description="Disordered" evidence="3">
    <location>
        <begin position="423"/>
        <end position="446"/>
    </location>
</feature>
<feature type="compositionally biased region" description="Acidic residues" evidence="3">
    <location>
        <begin position="429"/>
        <end position="446"/>
    </location>
</feature>
<feature type="binding site" evidence="2">
    <location>
        <position position="11"/>
    </location>
    <ligand>
        <name>GTP</name>
        <dbReference type="ChEBI" id="CHEBI:37565"/>
    </ligand>
</feature>
<feature type="binding site" evidence="1">
    <location>
        <position position="69"/>
    </location>
    <ligand>
        <name>GTP</name>
        <dbReference type="ChEBI" id="CHEBI:37565"/>
    </ligand>
</feature>
<feature type="binding site" evidence="1">
    <location>
        <position position="69"/>
    </location>
    <ligand>
        <name>Mg(2+)</name>
        <dbReference type="ChEBI" id="CHEBI:18420"/>
    </ligand>
</feature>
<feature type="binding site" evidence="2">
    <location>
        <position position="138"/>
    </location>
    <ligand>
        <name>GTP</name>
        <dbReference type="ChEBI" id="CHEBI:37565"/>
    </ligand>
</feature>
<feature type="binding site" evidence="2">
    <location>
        <position position="142"/>
    </location>
    <ligand>
        <name>GTP</name>
        <dbReference type="ChEBI" id="CHEBI:37565"/>
    </ligand>
</feature>
<feature type="binding site" evidence="2">
    <location>
        <position position="143"/>
    </location>
    <ligand>
        <name>GTP</name>
        <dbReference type="ChEBI" id="CHEBI:37565"/>
    </ligand>
</feature>
<feature type="binding site" evidence="2">
    <location>
        <position position="144"/>
    </location>
    <ligand>
        <name>GTP</name>
        <dbReference type="ChEBI" id="CHEBI:37565"/>
    </ligand>
</feature>
<feature type="binding site" evidence="2">
    <location>
        <position position="204"/>
    </location>
    <ligand>
        <name>GTP</name>
        <dbReference type="ChEBI" id="CHEBI:37565"/>
    </ligand>
</feature>
<feature type="binding site" evidence="2">
    <location>
        <position position="226"/>
    </location>
    <ligand>
        <name>GTP</name>
        <dbReference type="ChEBI" id="CHEBI:37565"/>
    </ligand>
</feature>